<dbReference type="EMBL" id="EF115543">
    <property type="protein sequence ID" value="ABK79591.1"/>
    <property type="molecule type" value="Genomic_DNA"/>
</dbReference>
<dbReference type="RefSeq" id="YP_874747.1">
    <property type="nucleotide sequence ID" value="NC_008591.1"/>
</dbReference>
<dbReference type="GeneID" id="4524989"/>
<dbReference type="GO" id="GO:0009535">
    <property type="term" value="C:chloroplast thylakoid membrane"/>
    <property type="evidence" value="ECO:0007669"/>
    <property type="project" value="UniProtKB-SubCell"/>
</dbReference>
<dbReference type="GO" id="GO:0009522">
    <property type="term" value="C:photosystem I"/>
    <property type="evidence" value="ECO:0007669"/>
    <property type="project" value="InterPro"/>
</dbReference>
<dbReference type="GO" id="GO:0015979">
    <property type="term" value="P:photosynthesis"/>
    <property type="evidence" value="ECO:0007669"/>
    <property type="project" value="UniProtKB-UniRule"/>
</dbReference>
<dbReference type="HAMAP" id="MF_00437">
    <property type="entry name" value="Ycf4"/>
    <property type="match status" value="1"/>
</dbReference>
<dbReference type="InterPro" id="IPR003359">
    <property type="entry name" value="PSI_Ycf4_assembly"/>
</dbReference>
<dbReference type="PANTHER" id="PTHR33288">
    <property type="match status" value="1"/>
</dbReference>
<dbReference type="PANTHER" id="PTHR33288:SF4">
    <property type="entry name" value="PHOTOSYSTEM I ASSEMBLY PROTEIN YCF4"/>
    <property type="match status" value="1"/>
</dbReference>
<dbReference type="Pfam" id="PF02392">
    <property type="entry name" value="Ycf4"/>
    <property type="match status" value="1"/>
</dbReference>
<protein>
    <recommendedName>
        <fullName evidence="1">Photosystem I assembly protein Ycf4</fullName>
    </recommendedName>
</protein>
<organism>
    <name type="scientific">Agrostis stolonifera</name>
    <name type="common">Creeping bentgrass</name>
    <dbReference type="NCBI Taxonomy" id="63632"/>
    <lineage>
        <taxon>Eukaryota</taxon>
        <taxon>Viridiplantae</taxon>
        <taxon>Streptophyta</taxon>
        <taxon>Embryophyta</taxon>
        <taxon>Tracheophyta</taxon>
        <taxon>Spermatophyta</taxon>
        <taxon>Magnoliopsida</taxon>
        <taxon>Liliopsida</taxon>
        <taxon>Poales</taxon>
        <taxon>Poaceae</taxon>
        <taxon>BOP clade</taxon>
        <taxon>Pooideae</taxon>
        <taxon>Poodae</taxon>
        <taxon>Poeae</taxon>
        <taxon>Poeae Chloroplast Group 1 (Aveneae type)</taxon>
        <taxon>Agrostidodinae</taxon>
        <taxon>Agrostidinae</taxon>
        <taxon>Agrostis</taxon>
    </lineage>
</organism>
<proteinExistence type="inferred from homology"/>
<evidence type="ECO:0000255" key="1">
    <source>
        <dbReference type="HAMAP-Rule" id="MF_00437"/>
    </source>
</evidence>
<name>YCF4_AGRST</name>
<reference key="1">
    <citation type="journal article" date="2007" name="Theor. Appl. Genet.">
        <title>Complete chloroplast genome sequences of Hordeum vulgare, Sorghum bicolor and Agrostis stolonifera, and comparative analyses with other grass genomes.</title>
        <authorList>
            <person name="Saski C."/>
            <person name="Lee S.-B."/>
            <person name="Fjellheim S."/>
            <person name="Guda C."/>
            <person name="Jansen R.K."/>
            <person name="Luo H."/>
            <person name="Tomkins J."/>
            <person name="Rognli O.A."/>
            <person name="Daniell H."/>
            <person name="Clarke J.L."/>
        </authorList>
    </citation>
    <scope>NUCLEOTIDE SEQUENCE [LARGE SCALE GENOMIC DNA]</scope>
    <source>
        <strain>cv. Penn A-4</strain>
    </source>
</reference>
<keyword id="KW-0150">Chloroplast</keyword>
<keyword id="KW-0472">Membrane</keyword>
<keyword id="KW-0602">Photosynthesis</keyword>
<keyword id="KW-0934">Plastid</keyword>
<keyword id="KW-0793">Thylakoid</keyword>
<keyword id="KW-0812">Transmembrane</keyword>
<keyword id="KW-1133">Transmembrane helix</keyword>
<feature type="chain" id="PRO_0000275646" description="Photosystem I assembly protein Ycf4">
    <location>
        <begin position="1"/>
        <end position="185"/>
    </location>
</feature>
<feature type="transmembrane region" description="Helical" evidence="1">
    <location>
        <begin position="20"/>
        <end position="40"/>
    </location>
</feature>
<feature type="transmembrane region" description="Helical" evidence="1">
    <location>
        <begin position="57"/>
        <end position="77"/>
    </location>
</feature>
<accession>A1EA19</accession>
<comment type="function">
    <text evidence="1">Seems to be required for the assembly of the photosystem I complex.</text>
</comment>
<comment type="subcellular location">
    <subcellularLocation>
        <location evidence="1">Plastid</location>
        <location evidence="1">Chloroplast thylakoid membrane</location>
        <topology evidence="1">Multi-pass membrane protein</topology>
    </subcellularLocation>
</comment>
<comment type="similarity">
    <text evidence="1">Belongs to the Ycf4 family.</text>
</comment>
<gene>
    <name evidence="1" type="primary">ycf4</name>
</gene>
<sequence>MNWRSEHVWVELLKGSRKRGNFFWACILFLGSLGFLSVGASSYLGKNIISILPSQQILFFPQGVVMSFYGIAGLFISSYLWCTILWNVGSGYDRFDRKEGIVCIFRWGFPGIKRRVFLQFLMRDIQSIRIQVKEGLYPRRILYMEIRGQGVIPLTRTDEKFFTPREIEQKAAELAYFLRVPIEVF</sequence>
<geneLocation type="chloroplast"/>